<feature type="chain" id="PRO_0000164350" description="Putative NrdI-like protein">
    <location>
        <begin position="1"/>
        <end position="156"/>
    </location>
</feature>
<organism>
    <name type="scientific">Streptococcus pneumoniae serotype 4 (strain ATCC BAA-334 / TIGR4)</name>
    <dbReference type="NCBI Taxonomy" id="170187"/>
    <lineage>
        <taxon>Bacteria</taxon>
        <taxon>Bacillati</taxon>
        <taxon>Bacillota</taxon>
        <taxon>Bacilli</taxon>
        <taxon>Lactobacillales</taxon>
        <taxon>Streptococcaceae</taxon>
        <taxon>Streptococcus</taxon>
    </lineage>
</organism>
<comment type="interaction">
    <interactant intactId="EBI-6472210">
        <id>Q97T03</id>
    </interactant>
    <interactant intactId="EBI-6472213">
        <id>A0A0H2UNE9</id>
        <label>cps4G</label>
    </interactant>
    <organismsDiffer>false</organismsDiffer>
    <experiments>2</experiments>
</comment>
<comment type="similarity">
    <text evidence="1">Belongs to the NrdI family.</text>
</comment>
<proteinExistence type="evidence at protein level"/>
<accession>Q97T03</accession>
<name>NRDIL_STRPN</name>
<dbReference type="EMBL" id="AE005672">
    <property type="protein sequence ID" value="AAK74340.1"/>
    <property type="molecule type" value="Genomic_DNA"/>
</dbReference>
<dbReference type="PIR" id="C95018">
    <property type="entry name" value="C95018"/>
</dbReference>
<dbReference type="SMR" id="Q97T03"/>
<dbReference type="IntAct" id="Q97T03">
    <property type="interactions" value="1"/>
</dbReference>
<dbReference type="PaxDb" id="170187-SP_0158"/>
<dbReference type="EnsemblBacteria" id="AAK74340">
    <property type="protein sequence ID" value="AAK74340"/>
    <property type="gene ID" value="SP_0158"/>
</dbReference>
<dbReference type="KEGG" id="spn:SP_0158"/>
<dbReference type="eggNOG" id="COG1780">
    <property type="taxonomic scope" value="Bacteria"/>
</dbReference>
<dbReference type="PhylomeDB" id="Q97T03"/>
<dbReference type="BioCyc" id="SPNE170187:G1FZB-167-MONOMER"/>
<dbReference type="Proteomes" id="UP000000585">
    <property type="component" value="Chromosome"/>
</dbReference>
<dbReference type="GO" id="GO:0010181">
    <property type="term" value="F:FMN binding"/>
    <property type="evidence" value="ECO:0007669"/>
    <property type="project" value="InterPro"/>
</dbReference>
<dbReference type="GO" id="GO:0036211">
    <property type="term" value="P:protein modification process"/>
    <property type="evidence" value="ECO:0007669"/>
    <property type="project" value="InterPro"/>
</dbReference>
<dbReference type="FunFam" id="3.40.50.360:FF:000046">
    <property type="entry name" value="NrdI protein, putative"/>
    <property type="match status" value="1"/>
</dbReference>
<dbReference type="Gene3D" id="3.40.50.360">
    <property type="match status" value="1"/>
</dbReference>
<dbReference type="InterPro" id="IPR029039">
    <property type="entry name" value="Flavoprotein-like_sf"/>
</dbReference>
<dbReference type="InterPro" id="IPR004465">
    <property type="entry name" value="RNR_NrdI"/>
</dbReference>
<dbReference type="NCBIfam" id="NF002714">
    <property type="entry name" value="PRK02551.1"/>
    <property type="match status" value="1"/>
</dbReference>
<dbReference type="PANTHER" id="PTHR37297">
    <property type="entry name" value="PROTEIN NRDI"/>
    <property type="match status" value="1"/>
</dbReference>
<dbReference type="PANTHER" id="PTHR37297:SF1">
    <property type="entry name" value="PROTEIN NRDI"/>
    <property type="match status" value="1"/>
</dbReference>
<dbReference type="Pfam" id="PF07972">
    <property type="entry name" value="Flavodoxin_NdrI"/>
    <property type="match status" value="1"/>
</dbReference>
<dbReference type="PIRSF" id="PIRSF005087">
    <property type="entry name" value="NrdI"/>
    <property type="match status" value="1"/>
</dbReference>
<dbReference type="SUPFAM" id="SSF52218">
    <property type="entry name" value="Flavoproteins"/>
    <property type="match status" value="1"/>
</dbReference>
<sequence>MKTISLVYISLSGNTESFVTRLKDYLLSQYKGIEVQKIHIKDLVKEGKNFYEMDHPYVAFLPTYLEGGNGVDNGDVEILTTPVGDFIAYGNNASKCFGVVGSGNRNFNNQYCLTAKQYSQRFGFPVLADFEMRGMLEDIKHVAAIIADLYELEKEN</sequence>
<keyword id="KW-1185">Reference proteome</keyword>
<gene>
    <name type="ordered locus">SP_0158</name>
</gene>
<reference key="1">
    <citation type="journal article" date="2001" name="Science">
        <title>Complete genome sequence of a virulent isolate of Streptococcus pneumoniae.</title>
        <authorList>
            <person name="Tettelin H."/>
            <person name="Nelson K.E."/>
            <person name="Paulsen I.T."/>
            <person name="Eisen J.A."/>
            <person name="Read T.D."/>
            <person name="Peterson S.N."/>
            <person name="Heidelberg J.F."/>
            <person name="DeBoy R.T."/>
            <person name="Haft D.H."/>
            <person name="Dodson R.J."/>
            <person name="Durkin A.S."/>
            <person name="Gwinn M.L."/>
            <person name="Kolonay J.F."/>
            <person name="Nelson W.C."/>
            <person name="Peterson J.D."/>
            <person name="Umayam L.A."/>
            <person name="White O."/>
            <person name="Salzberg S.L."/>
            <person name="Lewis M.R."/>
            <person name="Radune D."/>
            <person name="Holtzapple E.K."/>
            <person name="Khouri H.M."/>
            <person name="Wolf A.M."/>
            <person name="Utterback T.R."/>
            <person name="Hansen C.L."/>
            <person name="McDonald L.A."/>
            <person name="Feldblyum T.V."/>
            <person name="Angiuoli S.V."/>
            <person name="Dickinson T."/>
            <person name="Hickey E.K."/>
            <person name="Holt I.E."/>
            <person name="Loftus B.J."/>
            <person name="Yang F."/>
            <person name="Smith H.O."/>
            <person name="Venter J.C."/>
            <person name="Dougherty B.A."/>
            <person name="Morrison D.A."/>
            <person name="Hollingshead S.K."/>
            <person name="Fraser C.M."/>
        </authorList>
    </citation>
    <scope>NUCLEOTIDE SEQUENCE [LARGE SCALE GENOMIC DNA]</scope>
    <source>
        <strain>ATCC BAA-334 / TIGR4</strain>
    </source>
</reference>
<evidence type="ECO:0000305" key="1"/>
<protein>
    <recommendedName>
        <fullName>Putative NrdI-like protein</fullName>
    </recommendedName>
</protein>